<sequence length="302" mass="32740">MATETDLEELRRGSELVKRGFAKMQKGGVIMDVVNREQARIAEDVGAVAVMNLEAVPADIRKRGGVARMADPASLTGIIEEVSIPVMGKSRIGHRKEAEILQAVGADMIDESEVLTPADDEYHIDKREFTAPFVCGARNLGEALRRIDEGAAMIRTKGEAGTGDVNQAVHHQRNIKSAIRKLEGMDYEERDMWARDHEAPRELVHETAEMGRLPVVNFAAGGIATPADAALMMHHGCDGIFVGSGIFGAENPEAMGRAVVDAVNNHDDPERLAEIASNIGEGMQGDPNADLPEDERMQDRGN</sequence>
<proteinExistence type="inferred from homology"/>
<gene>
    <name evidence="1" type="primary">pdxS</name>
    <name type="ordered locus">VNG_1793C</name>
</gene>
<protein>
    <recommendedName>
        <fullName evidence="1">Pyridoxal 5'-phosphate synthase subunit PdxS</fullName>
        <shortName evidence="1">PLP synthase subunit PdxS</shortName>
        <ecNumber evidence="1">4.3.3.6</ecNumber>
    </recommendedName>
    <alternativeName>
        <fullName evidence="1">Pdx1</fullName>
    </alternativeName>
</protein>
<feature type="chain" id="PRO_0000109433" description="Pyridoxal 5'-phosphate synthase subunit PdxS">
    <location>
        <begin position="1"/>
        <end position="302"/>
    </location>
</feature>
<feature type="region of interest" description="Disordered" evidence="2">
    <location>
        <begin position="276"/>
        <end position="302"/>
    </location>
</feature>
<feature type="active site" description="Schiff-base intermediate with D-ribose 5-phosphate" evidence="1">
    <location>
        <position position="89"/>
    </location>
</feature>
<feature type="binding site" evidence="1">
    <location>
        <position position="32"/>
    </location>
    <ligand>
        <name>D-ribose 5-phosphate</name>
        <dbReference type="ChEBI" id="CHEBI:78346"/>
    </ligand>
</feature>
<feature type="binding site" evidence="1">
    <location>
        <position position="161"/>
    </location>
    <ligand>
        <name>D-ribose 5-phosphate</name>
        <dbReference type="ChEBI" id="CHEBI:78346"/>
    </ligand>
</feature>
<feature type="binding site" evidence="1">
    <location>
        <position position="173"/>
    </location>
    <ligand>
        <name>D-glyceraldehyde 3-phosphate</name>
        <dbReference type="ChEBI" id="CHEBI:59776"/>
    </ligand>
</feature>
<feature type="binding site" evidence="1">
    <location>
        <position position="222"/>
    </location>
    <ligand>
        <name>D-ribose 5-phosphate</name>
        <dbReference type="ChEBI" id="CHEBI:78346"/>
    </ligand>
</feature>
<feature type="binding site" evidence="1">
    <location>
        <begin position="243"/>
        <end position="244"/>
    </location>
    <ligand>
        <name>D-ribose 5-phosphate</name>
        <dbReference type="ChEBI" id="CHEBI:78346"/>
    </ligand>
</feature>
<evidence type="ECO:0000255" key="1">
    <source>
        <dbReference type="HAMAP-Rule" id="MF_01824"/>
    </source>
</evidence>
<evidence type="ECO:0000256" key="2">
    <source>
        <dbReference type="SAM" id="MobiDB-lite"/>
    </source>
</evidence>
<dbReference type="EC" id="4.3.3.6" evidence="1"/>
<dbReference type="EMBL" id="AE004437">
    <property type="protein sequence ID" value="AAG20013.1"/>
    <property type="molecule type" value="Genomic_DNA"/>
</dbReference>
<dbReference type="PIR" id="A84331">
    <property type="entry name" value="A84331"/>
</dbReference>
<dbReference type="RefSeq" id="WP_010903311.1">
    <property type="nucleotide sequence ID" value="NC_002607.1"/>
</dbReference>
<dbReference type="SMR" id="Q9HP57"/>
<dbReference type="FunCoup" id="Q9HP57">
    <property type="interactions" value="128"/>
</dbReference>
<dbReference type="STRING" id="64091.VNG_1793C"/>
<dbReference type="PaxDb" id="64091-VNG_1793C"/>
<dbReference type="GeneID" id="89350020"/>
<dbReference type="KEGG" id="hal:VNG_1793C"/>
<dbReference type="PATRIC" id="fig|64091.14.peg.1368"/>
<dbReference type="HOGENOM" id="CLU_055352_1_0_2"/>
<dbReference type="InParanoid" id="Q9HP57"/>
<dbReference type="OrthoDB" id="6840at2157"/>
<dbReference type="PhylomeDB" id="Q9HP57"/>
<dbReference type="UniPathway" id="UPA00245"/>
<dbReference type="Proteomes" id="UP000000554">
    <property type="component" value="Chromosome"/>
</dbReference>
<dbReference type="GO" id="GO:0016843">
    <property type="term" value="F:amine-lyase activity"/>
    <property type="evidence" value="ECO:0000318"/>
    <property type="project" value="GO_Central"/>
</dbReference>
<dbReference type="GO" id="GO:0036381">
    <property type="term" value="F:pyridoxal 5'-phosphate synthase (glutamine hydrolysing) activity"/>
    <property type="evidence" value="ECO:0007669"/>
    <property type="project" value="UniProtKB-UniRule"/>
</dbReference>
<dbReference type="GO" id="GO:0006520">
    <property type="term" value="P:amino acid metabolic process"/>
    <property type="evidence" value="ECO:0000318"/>
    <property type="project" value="GO_Central"/>
</dbReference>
<dbReference type="GO" id="GO:0042823">
    <property type="term" value="P:pyridoxal phosphate biosynthetic process"/>
    <property type="evidence" value="ECO:0000318"/>
    <property type="project" value="GO_Central"/>
</dbReference>
<dbReference type="GO" id="GO:0008615">
    <property type="term" value="P:pyridoxine biosynthetic process"/>
    <property type="evidence" value="ECO:0000318"/>
    <property type="project" value="GO_Central"/>
</dbReference>
<dbReference type="CDD" id="cd04727">
    <property type="entry name" value="pdxS"/>
    <property type="match status" value="1"/>
</dbReference>
<dbReference type="FunFam" id="3.20.20.70:FF:000001">
    <property type="entry name" value="Pyridoxine biosynthesis protein PDX1"/>
    <property type="match status" value="1"/>
</dbReference>
<dbReference type="Gene3D" id="3.20.20.70">
    <property type="entry name" value="Aldolase class I"/>
    <property type="match status" value="1"/>
</dbReference>
<dbReference type="HAMAP" id="MF_01824">
    <property type="entry name" value="PdxS"/>
    <property type="match status" value="1"/>
</dbReference>
<dbReference type="InterPro" id="IPR013785">
    <property type="entry name" value="Aldolase_TIM"/>
</dbReference>
<dbReference type="InterPro" id="IPR001852">
    <property type="entry name" value="PdxS/SNZ"/>
</dbReference>
<dbReference type="InterPro" id="IPR033755">
    <property type="entry name" value="PdxS/SNZ_N"/>
</dbReference>
<dbReference type="InterPro" id="IPR011060">
    <property type="entry name" value="RibuloseP-bd_barrel"/>
</dbReference>
<dbReference type="NCBIfam" id="NF003215">
    <property type="entry name" value="PRK04180.1"/>
    <property type="match status" value="1"/>
</dbReference>
<dbReference type="PANTHER" id="PTHR31829">
    <property type="entry name" value="PYRIDOXAL 5'-PHOSPHATE SYNTHASE SUBUNIT SNZ1-RELATED"/>
    <property type="match status" value="1"/>
</dbReference>
<dbReference type="PANTHER" id="PTHR31829:SF0">
    <property type="entry name" value="PYRIDOXAL 5'-PHOSPHATE SYNTHASE SUBUNIT SNZ1-RELATED"/>
    <property type="match status" value="1"/>
</dbReference>
<dbReference type="Pfam" id="PF01680">
    <property type="entry name" value="SOR_SNZ"/>
    <property type="match status" value="1"/>
</dbReference>
<dbReference type="PIRSF" id="PIRSF029271">
    <property type="entry name" value="Pdx1"/>
    <property type="match status" value="1"/>
</dbReference>
<dbReference type="SUPFAM" id="SSF51366">
    <property type="entry name" value="Ribulose-phoshate binding barrel"/>
    <property type="match status" value="1"/>
</dbReference>
<dbReference type="PROSITE" id="PS01235">
    <property type="entry name" value="PDXS_SNZ_1"/>
    <property type="match status" value="1"/>
</dbReference>
<dbReference type="PROSITE" id="PS51129">
    <property type="entry name" value="PDXS_SNZ_2"/>
    <property type="match status" value="1"/>
</dbReference>
<name>PDXS_HALSA</name>
<keyword id="KW-0456">Lyase</keyword>
<keyword id="KW-0663">Pyridoxal phosphate</keyword>
<keyword id="KW-1185">Reference proteome</keyword>
<keyword id="KW-0704">Schiff base</keyword>
<comment type="function">
    <text evidence="1">Catalyzes the formation of pyridoxal 5'-phosphate from ribose 5-phosphate (RBP), glyceraldehyde 3-phosphate (G3P) and ammonia. The ammonia is provided by the PdxT subunit. Can also use ribulose 5-phosphate and dihydroxyacetone phosphate as substrates, resulting from enzyme-catalyzed isomerization of RBP and G3P, respectively.</text>
</comment>
<comment type="catalytic activity">
    <reaction evidence="1">
        <text>aldehydo-D-ribose 5-phosphate + D-glyceraldehyde 3-phosphate + L-glutamine = pyridoxal 5'-phosphate + L-glutamate + phosphate + 3 H2O + H(+)</text>
        <dbReference type="Rhea" id="RHEA:31507"/>
        <dbReference type="ChEBI" id="CHEBI:15377"/>
        <dbReference type="ChEBI" id="CHEBI:15378"/>
        <dbReference type="ChEBI" id="CHEBI:29985"/>
        <dbReference type="ChEBI" id="CHEBI:43474"/>
        <dbReference type="ChEBI" id="CHEBI:58273"/>
        <dbReference type="ChEBI" id="CHEBI:58359"/>
        <dbReference type="ChEBI" id="CHEBI:59776"/>
        <dbReference type="ChEBI" id="CHEBI:597326"/>
        <dbReference type="EC" id="4.3.3.6"/>
    </reaction>
</comment>
<comment type="pathway">
    <text evidence="1">Cofactor biosynthesis; pyridoxal 5'-phosphate biosynthesis.</text>
</comment>
<comment type="subunit">
    <text evidence="1">In the presence of PdxT, forms a dodecamer of heterodimers.</text>
</comment>
<comment type="similarity">
    <text evidence="1">Belongs to the PdxS/SNZ family.</text>
</comment>
<organism>
    <name type="scientific">Halobacterium salinarum (strain ATCC 700922 / JCM 11081 / NRC-1)</name>
    <name type="common">Halobacterium halobium</name>
    <dbReference type="NCBI Taxonomy" id="64091"/>
    <lineage>
        <taxon>Archaea</taxon>
        <taxon>Methanobacteriati</taxon>
        <taxon>Methanobacteriota</taxon>
        <taxon>Stenosarchaea group</taxon>
        <taxon>Halobacteria</taxon>
        <taxon>Halobacteriales</taxon>
        <taxon>Halobacteriaceae</taxon>
        <taxon>Halobacterium</taxon>
        <taxon>Halobacterium salinarum NRC-34001</taxon>
    </lineage>
</organism>
<reference key="1">
    <citation type="journal article" date="2000" name="Proc. Natl. Acad. Sci. U.S.A.">
        <title>Genome sequence of Halobacterium species NRC-1.</title>
        <authorList>
            <person name="Ng W.V."/>
            <person name="Kennedy S.P."/>
            <person name="Mahairas G.G."/>
            <person name="Berquist B."/>
            <person name="Pan M."/>
            <person name="Shukla H.D."/>
            <person name="Lasky S.R."/>
            <person name="Baliga N.S."/>
            <person name="Thorsson V."/>
            <person name="Sbrogna J."/>
            <person name="Swartzell S."/>
            <person name="Weir D."/>
            <person name="Hall J."/>
            <person name="Dahl T.A."/>
            <person name="Welti R."/>
            <person name="Goo Y.A."/>
            <person name="Leithauser B."/>
            <person name="Keller K."/>
            <person name="Cruz R."/>
            <person name="Danson M.J."/>
            <person name="Hough D.W."/>
            <person name="Maddocks D.G."/>
            <person name="Jablonski P.E."/>
            <person name="Krebs M.P."/>
            <person name="Angevine C.M."/>
            <person name="Dale H."/>
            <person name="Isenbarger T.A."/>
            <person name="Peck R.F."/>
            <person name="Pohlschroder M."/>
            <person name="Spudich J.L."/>
            <person name="Jung K.-H."/>
            <person name="Alam M."/>
            <person name="Freitas T."/>
            <person name="Hou S."/>
            <person name="Daniels C.J."/>
            <person name="Dennis P.P."/>
            <person name="Omer A.D."/>
            <person name="Ebhardt H."/>
            <person name="Lowe T.M."/>
            <person name="Liang P."/>
            <person name="Riley M."/>
            <person name="Hood L."/>
            <person name="DasSarma S."/>
        </authorList>
    </citation>
    <scope>NUCLEOTIDE SEQUENCE [LARGE SCALE GENOMIC DNA]</scope>
    <source>
        <strain>ATCC 700922 / JCM 11081 / NRC-1</strain>
    </source>
</reference>
<accession>Q9HP57</accession>